<accession>A4X615</accession>
<name>PYRB_SALTO</name>
<protein>
    <recommendedName>
        <fullName evidence="1">Aspartate carbamoyltransferase catalytic subunit</fullName>
        <ecNumber evidence="1">2.1.3.2</ecNumber>
    </recommendedName>
    <alternativeName>
        <fullName evidence="1">Aspartate transcarbamylase</fullName>
        <shortName evidence="1">ATCase</shortName>
    </alternativeName>
</protein>
<dbReference type="EC" id="2.1.3.2" evidence="1"/>
<dbReference type="EMBL" id="CP000667">
    <property type="protein sequence ID" value="ABP54315.1"/>
    <property type="molecule type" value="Genomic_DNA"/>
</dbReference>
<dbReference type="RefSeq" id="WP_011905746.1">
    <property type="nucleotide sequence ID" value="NC_009380.1"/>
</dbReference>
<dbReference type="SMR" id="A4X615"/>
<dbReference type="STRING" id="369723.Strop_1853"/>
<dbReference type="KEGG" id="stp:Strop_1853"/>
<dbReference type="PATRIC" id="fig|369723.5.peg.1901"/>
<dbReference type="eggNOG" id="COG0540">
    <property type="taxonomic scope" value="Bacteria"/>
</dbReference>
<dbReference type="HOGENOM" id="CLU_043846_2_0_11"/>
<dbReference type="UniPathway" id="UPA00070">
    <property type="reaction ID" value="UER00116"/>
</dbReference>
<dbReference type="Proteomes" id="UP000000235">
    <property type="component" value="Chromosome"/>
</dbReference>
<dbReference type="GO" id="GO:0005829">
    <property type="term" value="C:cytosol"/>
    <property type="evidence" value="ECO:0007669"/>
    <property type="project" value="TreeGrafter"/>
</dbReference>
<dbReference type="GO" id="GO:0016597">
    <property type="term" value="F:amino acid binding"/>
    <property type="evidence" value="ECO:0007669"/>
    <property type="project" value="InterPro"/>
</dbReference>
<dbReference type="GO" id="GO:0004070">
    <property type="term" value="F:aspartate carbamoyltransferase activity"/>
    <property type="evidence" value="ECO:0007669"/>
    <property type="project" value="UniProtKB-UniRule"/>
</dbReference>
<dbReference type="GO" id="GO:0006207">
    <property type="term" value="P:'de novo' pyrimidine nucleobase biosynthetic process"/>
    <property type="evidence" value="ECO:0007669"/>
    <property type="project" value="InterPro"/>
</dbReference>
<dbReference type="GO" id="GO:0044205">
    <property type="term" value="P:'de novo' UMP biosynthetic process"/>
    <property type="evidence" value="ECO:0007669"/>
    <property type="project" value="UniProtKB-UniRule"/>
</dbReference>
<dbReference type="GO" id="GO:0006520">
    <property type="term" value="P:amino acid metabolic process"/>
    <property type="evidence" value="ECO:0007669"/>
    <property type="project" value="InterPro"/>
</dbReference>
<dbReference type="FunFam" id="3.40.50.1370:FF:000007">
    <property type="entry name" value="Aspartate carbamoyltransferase"/>
    <property type="match status" value="1"/>
</dbReference>
<dbReference type="FunFam" id="3.40.50.1370:FF:000012">
    <property type="entry name" value="Aspartate carbamoyltransferase"/>
    <property type="match status" value="1"/>
</dbReference>
<dbReference type="Gene3D" id="3.40.50.1370">
    <property type="entry name" value="Aspartate/ornithine carbamoyltransferase"/>
    <property type="match status" value="2"/>
</dbReference>
<dbReference type="HAMAP" id="MF_00001">
    <property type="entry name" value="Asp_carb_tr"/>
    <property type="match status" value="1"/>
</dbReference>
<dbReference type="InterPro" id="IPR006132">
    <property type="entry name" value="Asp/Orn_carbamoyltranf_P-bd"/>
</dbReference>
<dbReference type="InterPro" id="IPR006130">
    <property type="entry name" value="Asp/Orn_carbamoylTrfase"/>
</dbReference>
<dbReference type="InterPro" id="IPR036901">
    <property type="entry name" value="Asp/Orn_carbamoylTrfase_sf"/>
</dbReference>
<dbReference type="InterPro" id="IPR002082">
    <property type="entry name" value="Asp_carbamoyltransf"/>
</dbReference>
<dbReference type="InterPro" id="IPR006131">
    <property type="entry name" value="Asp_carbamoyltransf_Asp/Orn-bd"/>
</dbReference>
<dbReference type="NCBIfam" id="TIGR00670">
    <property type="entry name" value="asp_carb_tr"/>
    <property type="match status" value="1"/>
</dbReference>
<dbReference type="NCBIfam" id="NF002032">
    <property type="entry name" value="PRK00856.1"/>
    <property type="match status" value="1"/>
</dbReference>
<dbReference type="PANTHER" id="PTHR45753:SF6">
    <property type="entry name" value="ASPARTATE CARBAMOYLTRANSFERASE"/>
    <property type="match status" value="1"/>
</dbReference>
<dbReference type="PANTHER" id="PTHR45753">
    <property type="entry name" value="ORNITHINE CARBAMOYLTRANSFERASE, MITOCHONDRIAL"/>
    <property type="match status" value="1"/>
</dbReference>
<dbReference type="Pfam" id="PF00185">
    <property type="entry name" value="OTCace"/>
    <property type="match status" value="1"/>
</dbReference>
<dbReference type="Pfam" id="PF02729">
    <property type="entry name" value="OTCace_N"/>
    <property type="match status" value="1"/>
</dbReference>
<dbReference type="PRINTS" id="PR00100">
    <property type="entry name" value="AOTCASE"/>
</dbReference>
<dbReference type="PRINTS" id="PR00101">
    <property type="entry name" value="ATCASE"/>
</dbReference>
<dbReference type="SUPFAM" id="SSF53671">
    <property type="entry name" value="Aspartate/ornithine carbamoyltransferase"/>
    <property type="match status" value="1"/>
</dbReference>
<dbReference type="PROSITE" id="PS00097">
    <property type="entry name" value="CARBAMOYLTRANSFERASE"/>
    <property type="match status" value="1"/>
</dbReference>
<comment type="function">
    <text evidence="1">Catalyzes the condensation of carbamoyl phosphate and aspartate to form carbamoyl aspartate and inorganic phosphate, the committed step in the de novo pyrimidine nucleotide biosynthesis pathway.</text>
</comment>
<comment type="catalytic activity">
    <reaction evidence="1">
        <text>carbamoyl phosphate + L-aspartate = N-carbamoyl-L-aspartate + phosphate + H(+)</text>
        <dbReference type="Rhea" id="RHEA:20013"/>
        <dbReference type="ChEBI" id="CHEBI:15378"/>
        <dbReference type="ChEBI" id="CHEBI:29991"/>
        <dbReference type="ChEBI" id="CHEBI:32814"/>
        <dbReference type="ChEBI" id="CHEBI:43474"/>
        <dbReference type="ChEBI" id="CHEBI:58228"/>
        <dbReference type="EC" id="2.1.3.2"/>
    </reaction>
</comment>
<comment type="pathway">
    <text evidence="1">Pyrimidine metabolism; UMP biosynthesis via de novo pathway; (S)-dihydroorotate from bicarbonate: step 2/3.</text>
</comment>
<comment type="subunit">
    <text evidence="1">Heterododecamer (2C3:3R2) of six catalytic PyrB chains organized as two trimers (C3), and six regulatory PyrI chains organized as three dimers (R2).</text>
</comment>
<comment type="similarity">
    <text evidence="1">Belongs to the aspartate/ornithine carbamoyltransferase superfamily. ATCase family.</text>
</comment>
<proteinExistence type="inferred from homology"/>
<organism>
    <name type="scientific">Salinispora tropica (strain ATCC BAA-916 / DSM 44818 / JCM 13857 / NBRC 105044 / CNB-440)</name>
    <dbReference type="NCBI Taxonomy" id="369723"/>
    <lineage>
        <taxon>Bacteria</taxon>
        <taxon>Bacillati</taxon>
        <taxon>Actinomycetota</taxon>
        <taxon>Actinomycetes</taxon>
        <taxon>Micromonosporales</taxon>
        <taxon>Micromonosporaceae</taxon>
        <taxon>Salinispora</taxon>
    </lineage>
</organism>
<reference key="1">
    <citation type="journal article" date="2007" name="Proc. Natl. Acad. Sci. U.S.A.">
        <title>Genome sequencing reveals complex secondary metabolome in the marine actinomycete Salinispora tropica.</title>
        <authorList>
            <person name="Udwary D.W."/>
            <person name="Zeigler L."/>
            <person name="Asolkar R.N."/>
            <person name="Singan V."/>
            <person name="Lapidus A."/>
            <person name="Fenical W."/>
            <person name="Jensen P.R."/>
            <person name="Moore B.S."/>
        </authorList>
    </citation>
    <scope>NUCLEOTIDE SEQUENCE [LARGE SCALE GENOMIC DNA]</scope>
    <source>
        <strain>ATCC BAA-916 / DSM 44818 / JCM 13857 / NBRC 105044 / CNB-440</strain>
    </source>
</reference>
<gene>
    <name evidence="1" type="primary">pyrB</name>
    <name type="ordered locus">Strop_1853</name>
</gene>
<keyword id="KW-0665">Pyrimidine biosynthesis</keyword>
<keyword id="KW-1185">Reference proteome</keyword>
<keyword id="KW-0808">Transferase</keyword>
<evidence type="ECO:0000255" key="1">
    <source>
        <dbReference type="HAMAP-Rule" id="MF_00001"/>
    </source>
</evidence>
<sequence length="308" mass="32952">MIRHLLSSADLDAGTALQILDTAAEMATVAGREVKKLPALRGRTVVNLFYEDSTRTRISFEAAAKRLSADVINFSVKGSSVAKGESLKDTALTLQAMGADAVVVRHPASGAPYQLADWVDGSVVNAGDGTHEHPTQALLDAYTMRSRLGRLAGLSVAVVGDVLHSRVARSNVLLLSTLGAKVTLVGPPPLIPVDIAAALAPSAAVCYDLDAVLPQSDVVMMLRVQRERMNDSYFPSAREYARRYGLDGSRMRRLPEHAIVMHPGPMNRGMEITSEVADSPRSTIVEQVANGVSVRMAVLYLLLGGNNR</sequence>
<feature type="chain" id="PRO_0000334592" description="Aspartate carbamoyltransferase catalytic subunit">
    <location>
        <begin position="1"/>
        <end position="308"/>
    </location>
</feature>
<feature type="binding site" evidence="1">
    <location>
        <position position="55"/>
    </location>
    <ligand>
        <name>carbamoyl phosphate</name>
        <dbReference type="ChEBI" id="CHEBI:58228"/>
    </ligand>
</feature>
<feature type="binding site" evidence="1">
    <location>
        <position position="56"/>
    </location>
    <ligand>
        <name>carbamoyl phosphate</name>
        <dbReference type="ChEBI" id="CHEBI:58228"/>
    </ligand>
</feature>
<feature type="binding site" evidence="1">
    <location>
        <position position="83"/>
    </location>
    <ligand>
        <name>L-aspartate</name>
        <dbReference type="ChEBI" id="CHEBI:29991"/>
    </ligand>
</feature>
<feature type="binding site" evidence="1">
    <location>
        <position position="105"/>
    </location>
    <ligand>
        <name>carbamoyl phosphate</name>
        <dbReference type="ChEBI" id="CHEBI:58228"/>
    </ligand>
</feature>
<feature type="binding site" evidence="1">
    <location>
        <position position="133"/>
    </location>
    <ligand>
        <name>carbamoyl phosphate</name>
        <dbReference type="ChEBI" id="CHEBI:58228"/>
    </ligand>
</feature>
<feature type="binding site" evidence="1">
    <location>
        <position position="136"/>
    </location>
    <ligand>
        <name>carbamoyl phosphate</name>
        <dbReference type="ChEBI" id="CHEBI:58228"/>
    </ligand>
</feature>
<feature type="binding site" evidence="1">
    <location>
        <position position="166"/>
    </location>
    <ligand>
        <name>L-aspartate</name>
        <dbReference type="ChEBI" id="CHEBI:29991"/>
    </ligand>
</feature>
<feature type="binding site" evidence="1">
    <location>
        <position position="223"/>
    </location>
    <ligand>
        <name>L-aspartate</name>
        <dbReference type="ChEBI" id="CHEBI:29991"/>
    </ligand>
</feature>
<feature type="binding site" evidence="1">
    <location>
        <position position="264"/>
    </location>
    <ligand>
        <name>carbamoyl phosphate</name>
        <dbReference type="ChEBI" id="CHEBI:58228"/>
    </ligand>
</feature>
<feature type="binding site" evidence="1">
    <location>
        <position position="265"/>
    </location>
    <ligand>
        <name>carbamoyl phosphate</name>
        <dbReference type="ChEBI" id="CHEBI:58228"/>
    </ligand>
</feature>